<keyword id="KW-1217">Cell adhesion impairing toxin</keyword>
<keyword id="KW-0903">Direct protein sequencing</keyword>
<keyword id="KW-1015">Disulfide bond</keyword>
<keyword id="KW-1199">Hemostasis impairing toxin</keyword>
<keyword id="KW-1201">Platelet aggregation inhibiting toxin</keyword>
<keyword id="KW-0964">Secreted</keyword>
<keyword id="KW-0800">Toxin</keyword>
<protein>
    <recommendedName>
        <fullName evidence="5">Disintegrin basilicin</fullName>
    </recommendedName>
    <alternativeName>
        <fullName evidence="6">Basicilin</fullName>
    </alternativeName>
    <alternativeName>
        <fullName>Platelet aggregation activation inhibitor</fullName>
    </alternativeName>
</protein>
<accession>P31981</accession>
<reference key="1">
    <citation type="journal article" date="1993" name="J. Biol. Chem.">
        <title>Characterization of the integrin specificities of disintegrins isolated from American pit viper venoms.</title>
        <authorList>
            <person name="Scarborough R.M."/>
            <person name="Rose J.W."/>
            <person name="Naughton M.A."/>
            <person name="Phillips D.R."/>
            <person name="Nannizzi L."/>
            <person name="Arfsten A."/>
            <person name="Campbell A.M."/>
            <person name="Charo I.F."/>
        </authorList>
    </citation>
    <scope>PROTEIN SEQUENCE</scope>
    <scope>SUBCELLULAR LOCATION</scope>
    <source>
        <tissue>Venom</tissue>
    </source>
</reference>
<evidence type="ECO:0000250" key="1"/>
<evidence type="ECO:0000250" key="2">
    <source>
        <dbReference type="UniProtKB" id="Q0NZX5"/>
    </source>
</evidence>
<evidence type="ECO:0000255" key="3">
    <source>
        <dbReference type="PROSITE-ProRule" id="PRU00068"/>
    </source>
</evidence>
<evidence type="ECO:0000269" key="4">
    <source>
    </source>
</evidence>
<evidence type="ECO:0000303" key="5">
    <source>
    </source>
</evidence>
<evidence type="ECO:0000305" key="6"/>
<evidence type="ECO:0000305" key="7">
    <source>
    </source>
</evidence>
<organism>
    <name type="scientific">Crotalus basiliscus</name>
    <name type="common">Mexican west-coast rattlesnake</name>
    <dbReference type="NCBI Taxonomy" id="8744"/>
    <lineage>
        <taxon>Eukaryota</taxon>
        <taxon>Metazoa</taxon>
        <taxon>Chordata</taxon>
        <taxon>Craniata</taxon>
        <taxon>Vertebrata</taxon>
        <taxon>Euteleostomi</taxon>
        <taxon>Lepidosauria</taxon>
        <taxon>Squamata</taxon>
        <taxon>Bifurcata</taxon>
        <taxon>Unidentata</taxon>
        <taxon>Episquamata</taxon>
        <taxon>Toxicofera</taxon>
        <taxon>Serpentes</taxon>
        <taxon>Colubroidea</taxon>
        <taxon>Viperidae</taxon>
        <taxon>Crotalinae</taxon>
        <taxon>Crotalus</taxon>
    </lineage>
</organism>
<feature type="chain" id="PRO_0000101791" description="Disintegrin basilicin" evidence="4">
    <location>
        <begin position="1"/>
        <end position="72"/>
    </location>
</feature>
<feature type="domain" description="Disintegrin" evidence="3">
    <location>
        <begin position="1"/>
        <end position="72"/>
    </location>
</feature>
<feature type="short sequence motif" description="Cell attachment site">
    <location>
        <begin position="50"/>
        <end position="52"/>
    </location>
</feature>
<feature type="disulfide bond" evidence="2">
    <location>
        <begin position="5"/>
        <end position="20"/>
    </location>
</feature>
<feature type="disulfide bond" evidence="2">
    <location>
        <begin position="7"/>
        <end position="15"/>
    </location>
</feature>
<feature type="disulfide bond" evidence="2">
    <location>
        <begin position="14"/>
        <end position="37"/>
    </location>
</feature>
<feature type="disulfide bond" evidence="2">
    <location>
        <begin position="28"/>
        <end position="34"/>
    </location>
</feature>
<feature type="disulfide bond" evidence="2">
    <location>
        <begin position="33"/>
        <end position="58"/>
    </location>
</feature>
<feature type="disulfide bond" evidence="2 3">
    <location>
        <begin position="46"/>
        <end position="65"/>
    </location>
</feature>
<sequence length="72" mass="7704">AGEECDCGSPANPCCDAATCKLRPGAQCAEGLCCDQCRFIKKGKICRRARGDNPDDRCTGQSADCPRNHFHA</sequence>
<dbReference type="PIR" id="I43019">
    <property type="entry name" value="I43019"/>
</dbReference>
<dbReference type="SMR" id="P31981"/>
<dbReference type="GO" id="GO:0005576">
    <property type="term" value="C:extracellular region"/>
    <property type="evidence" value="ECO:0007669"/>
    <property type="project" value="UniProtKB-SubCell"/>
</dbReference>
<dbReference type="GO" id="GO:0005886">
    <property type="term" value="C:plasma membrane"/>
    <property type="evidence" value="ECO:0007669"/>
    <property type="project" value="TreeGrafter"/>
</dbReference>
<dbReference type="GO" id="GO:0090729">
    <property type="term" value="F:toxin activity"/>
    <property type="evidence" value="ECO:0007669"/>
    <property type="project" value="UniProtKB-KW"/>
</dbReference>
<dbReference type="FunFam" id="4.10.70.10:FF:000005">
    <property type="entry name" value="Zinc metalloproteinase/disintegrin"/>
    <property type="match status" value="1"/>
</dbReference>
<dbReference type="Gene3D" id="4.10.70.10">
    <property type="entry name" value="Disintegrin domain"/>
    <property type="match status" value="1"/>
</dbReference>
<dbReference type="InterPro" id="IPR018358">
    <property type="entry name" value="Disintegrin_CS"/>
</dbReference>
<dbReference type="InterPro" id="IPR001762">
    <property type="entry name" value="Disintegrin_dom"/>
</dbReference>
<dbReference type="InterPro" id="IPR036436">
    <property type="entry name" value="Disintegrin_dom_sf"/>
</dbReference>
<dbReference type="PANTHER" id="PTHR11905">
    <property type="entry name" value="ADAM A DISINTEGRIN AND METALLOPROTEASE DOMAIN"/>
    <property type="match status" value="1"/>
</dbReference>
<dbReference type="PANTHER" id="PTHR11905:SF32">
    <property type="entry name" value="DISINTEGRIN AND METALLOPROTEINASE DOMAIN-CONTAINING PROTEIN 28"/>
    <property type="match status" value="1"/>
</dbReference>
<dbReference type="Pfam" id="PF00200">
    <property type="entry name" value="Disintegrin"/>
    <property type="match status" value="1"/>
</dbReference>
<dbReference type="PRINTS" id="PR00289">
    <property type="entry name" value="DISINTEGRIN"/>
</dbReference>
<dbReference type="SMART" id="SM00050">
    <property type="entry name" value="DISIN"/>
    <property type="match status" value="1"/>
</dbReference>
<dbReference type="SUPFAM" id="SSF57552">
    <property type="entry name" value="Blood coagulation inhibitor (disintegrin)"/>
    <property type="match status" value="1"/>
</dbReference>
<dbReference type="PROSITE" id="PS00427">
    <property type="entry name" value="DISINTEGRIN_1"/>
    <property type="match status" value="1"/>
</dbReference>
<dbReference type="PROSITE" id="PS50214">
    <property type="entry name" value="DISINTEGRIN_2"/>
    <property type="match status" value="1"/>
</dbReference>
<comment type="function">
    <text>Inhibits fibrinogen interaction with platelets. Acts by binding to alpha-IIb/beta-3 (ITGA2B/ITGB3) on the platelet surface and inhibits aggregation induced by ADP, thrombin, platelet-activating factor and collagen.</text>
</comment>
<comment type="subunit">
    <text evidence="1">Monomer (disintegrin).</text>
</comment>
<comment type="subcellular location">
    <subcellularLocation>
        <location evidence="4">Secreted</location>
    </subcellularLocation>
</comment>
<comment type="tissue specificity">
    <text evidence="7">Expressed by the venom gland.</text>
</comment>
<comment type="miscellaneous">
    <text>The disintegrin belongs to the medium disintegrin subfamily.</text>
</comment>
<comment type="similarity">
    <text evidence="6">Belongs to the venom metalloproteinase (M12B) family. P-II subfamily. P-IIa sub-subfamily.</text>
</comment>
<comment type="caution">
    <text evidence="6">The term basicilin was erroneously reported in a review. Since such a letter reversal is relatively common, we thought it would be appropriate to indicate it here to facilitate the search for this protein.</text>
</comment>
<proteinExistence type="evidence at protein level"/>
<name>VM2I_CROBA</name>